<proteinExistence type="evidence at transcript level"/>
<comment type="disruption phenotype">
    <text evidence="3">No germination phenotype.</text>
</comment>
<comment type="sequence caution" evidence="5">
    <conflict type="erroneous gene model prediction">
        <sequence resource="EMBL-CDS" id="AEE84073"/>
    </conflict>
</comment>
<reference key="1">
    <citation type="journal article" date="1999" name="Nature">
        <title>Sequence and analysis of chromosome 4 of the plant Arabidopsis thaliana.</title>
        <authorList>
            <person name="Mayer K.F.X."/>
            <person name="Schueller C."/>
            <person name="Wambutt R."/>
            <person name="Murphy G."/>
            <person name="Volckaert G."/>
            <person name="Pohl T."/>
            <person name="Duesterhoeft A."/>
            <person name="Stiekema W."/>
            <person name="Entian K.-D."/>
            <person name="Terryn N."/>
            <person name="Harris B."/>
            <person name="Ansorge W."/>
            <person name="Brandt P."/>
            <person name="Grivell L.A."/>
            <person name="Rieger M."/>
            <person name="Weichselgartner M."/>
            <person name="de Simone V."/>
            <person name="Obermaier B."/>
            <person name="Mache R."/>
            <person name="Mueller M."/>
            <person name="Kreis M."/>
            <person name="Delseny M."/>
            <person name="Puigdomenech P."/>
            <person name="Watson M."/>
            <person name="Schmidtheini T."/>
            <person name="Reichert B."/>
            <person name="Portetelle D."/>
            <person name="Perez-Alonso M."/>
            <person name="Boutry M."/>
            <person name="Bancroft I."/>
            <person name="Vos P."/>
            <person name="Hoheisel J."/>
            <person name="Zimmermann W."/>
            <person name="Wedler H."/>
            <person name="Ridley P."/>
            <person name="Langham S.-A."/>
            <person name="McCullagh B."/>
            <person name="Bilham L."/>
            <person name="Robben J."/>
            <person name="van der Schueren J."/>
            <person name="Grymonprez B."/>
            <person name="Chuang Y.-J."/>
            <person name="Vandenbussche F."/>
            <person name="Braeken M."/>
            <person name="Weltjens I."/>
            <person name="Voet M."/>
            <person name="Bastiaens I."/>
            <person name="Aert R."/>
            <person name="Defoor E."/>
            <person name="Weitzenegger T."/>
            <person name="Bothe G."/>
            <person name="Ramsperger U."/>
            <person name="Hilbert H."/>
            <person name="Braun M."/>
            <person name="Holzer E."/>
            <person name="Brandt A."/>
            <person name="Peters S."/>
            <person name="van Staveren M."/>
            <person name="Dirkse W."/>
            <person name="Mooijman P."/>
            <person name="Klein Lankhorst R."/>
            <person name="Rose M."/>
            <person name="Hauf J."/>
            <person name="Koetter P."/>
            <person name="Berneiser S."/>
            <person name="Hempel S."/>
            <person name="Feldpausch M."/>
            <person name="Lamberth S."/>
            <person name="Van den Daele H."/>
            <person name="De Keyser A."/>
            <person name="Buysshaert C."/>
            <person name="Gielen J."/>
            <person name="Villarroel R."/>
            <person name="De Clercq R."/>
            <person name="van Montagu M."/>
            <person name="Rogers J."/>
            <person name="Cronin A."/>
            <person name="Quail M.A."/>
            <person name="Bray-Allen S."/>
            <person name="Clark L."/>
            <person name="Doggett J."/>
            <person name="Hall S."/>
            <person name="Kay M."/>
            <person name="Lennard N."/>
            <person name="McLay K."/>
            <person name="Mayes R."/>
            <person name="Pettett A."/>
            <person name="Rajandream M.A."/>
            <person name="Lyne M."/>
            <person name="Benes V."/>
            <person name="Rechmann S."/>
            <person name="Borkova D."/>
            <person name="Bloecker H."/>
            <person name="Scharfe M."/>
            <person name="Grimm M."/>
            <person name="Loehnert T.-H."/>
            <person name="Dose S."/>
            <person name="de Haan M."/>
            <person name="Maarse A.C."/>
            <person name="Schaefer M."/>
            <person name="Mueller-Auer S."/>
            <person name="Gabel C."/>
            <person name="Fuchs M."/>
            <person name="Fartmann B."/>
            <person name="Granderath K."/>
            <person name="Dauner D."/>
            <person name="Herzl A."/>
            <person name="Neumann S."/>
            <person name="Argiriou A."/>
            <person name="Vitale D."/>
            <person name="Liguori R."/>
            <person name="Piravandi E."/>
            <person name="Massenet O."/>
            <person name="Quigley F."/>
            <person name="Clabauld G."/>
            <person name="Muendlein A."/>
            <person name="Felber R."/>
            <person name="Schnabl S."/>
            <person name="Hiller R."/>
            <person name="Schmidt W."/>
            <person name="Lecharny A."/>
            <person name="Aubourg S."/>
            <person name="Chefdor F."/>
            <person name="Cooke R."/>
            <person name="Berger C."/>
            <person name="Monfort A."/>
            <person name="Casacuberta E."/>
            <person name="Gibbons T."/>
            <person name="Weber N."/>
            <person name="Vandenbol M."/>
            <person name="Bargues M."/>
            <person name="Terol J."/>
            <person name="Torres A."/>
            <person name="Perez-Perez A."/>
            <person name="Purnelle B."/>
            <person name="Bent E."/>
            <person name="Johnson S."/>
            <person name="Tacon D."/>
            <person name="Jesse T."/>
            <person name="Heijnen L."/>
            <person name="Schwarz S."/>
            <person name="Scholler P."/>
            <person name="Heber S."/>
            <person name="Francs P."/>
            <person name="Bielke C."/>
            <person name="Frishman D."/>
            <person name="Haase D."/>
            <person name="Lemcke K."/>
            <person name="Mewes H.-W."/>
            <person name="Stocker S."/>
            <person name="Zaccaria P."/>
            <person name="Bevan M."/>
            <person name="Wilson R.K."/>
            <person name="de la Bastide M."/>
            <person name="Habermann K."/>
            <person name="Parnell L."/>
            <person name="Dedhia N."/>
            <person name="Gnoj L."/>
            <person name="Schutz K."/>
            <person name="Huang E."/>
            <person name="Spiegel L."/>
            <person name="Sekhon M."/>
            <person name="Murray J."/>
            <person name="Sheet P."/>
            <person name="Cordes M."/>
            <person name="Abu-Threideh J."/>
            <person name="Stoneking T."/>
            <person name="Kalicki J."/>
            <person name="Graves T."/>
            <person name="Harmon G."/>
            <person name="Edwards J."/>
            <person name="Latreille P."/>
            <person name="Courtney L."/>
            <person name="Cloud J."/>
            <person name="Abbott A."/>
            <person name="Scott K."/>
            <person name="Johnson D."/>
            <person name="Minx P."/>
            <person name="Bentley D."/>
            <person name="Fulton B."/>
            <person name="Miller N."/>
            <person name="Greco T."/>
            <person name="Kemp K."/>
            <person name="Kramer J."/>
            <person name="Fulton L."/>
            <person name="Mardis E."/>
            <person name="Dante M."/>
            <person name="Pepin K."/>
            <person name="Hillier L.W."/>
            <person name="Nelson J."/>
            <person name="Spieth J."/>
            <person name="Ryan E."/>
            <person name="Andrews S."/>
            <person name="Geisel C."/>
            <person name="Layman D."/>
            <person name="Du H."/>
            <person name="Ali J."/>
            <person name="Berghoff A."/>
            <person name="Jones K."/>
            <person name="Drone K."/>
            <person name="Cotton M."/>
            <person name="Joshu C."/>
            <person name="Antonoiu B."/>
            <person name="Zidanic M."/>
            <person name="Strong C."/>
            <person name="Sun H."/>
            <person name="Lamar B."/>
            <person name="Yordan C."/>
            <person name="Ma P."/>
            <person name="Zhong J."/>
            <person name="Preston R."/>
            <person name="Vil D."/>
            <person name="Shekher M."/>
            <person name="Matero A."/>
            <person name="Shah R."/>
            <person name="Swaby I.K."/>
            <person name="O'Shaughnessy A."/>
            <person name="Rodriguez M."/>
            <person name="Hoffman J."/>
            <person name="Till S."/>
            <person name="Granat S."/>
            <person name="Shohdy N."/>
            <person name="Hasegawa A."/>
            <person name="Hameed A."/>
            <person name="Lodhi M."/>
            <person name="Johnson A."/>
            <person name="Chen E."/>
            <person name="Marra M.A."/>
            <person name="Martienssen R."/>
            <person name="McCombie W.R."/>
        </authorList>
    </citation>
    <scope>NUCLEOTIDE SEQUENCE [LARGE SCALE GENOMIC DNA]</scope>
    <source>
        <strain>cv. Columbia</strain>
    </source>
</reference>
<reference key="2">
    <citation type="journal article" date="2017" name="Plant J.">
        <title>Araport11: a complete reannotation of the Arabidopsis thaliana reference genome.</title>
        <authorList>
            <person name="Cheng C.Y."/>
            <person name="Krishnakumar V."/>
            <person name="Chan A.P."/>
            <person name="Thibaud-Nissen F."/>
            <person name="Schobel S."/>
            <person name="Town C.D."/>
        </authorList>
    </citation>
    <scope>GENOME REANNOTATION</scope>
    <source>
        <strain>cv. Columbia</strain>
    </source>
</reference>
<reference key="3">
    <citation type="submission" date="2005-07" db="EMBL/GenBank/DDBJ databases">
        <title>Reconstruction of cDNA sequences for hypothetical genes in Arabidopsis thaliana from 5' and 3' RACE products.</title>
        <authorList>
            <person name="Xiao Y."/>
            <person name="Underwood B.A."/>
            <person name="Moskal W."/>
            <person name="Redman J."/>
            <person name="Wang W."/>
            <person name="Monaghan E."/>
            <person name="Wu H.C."/>
            <person name="Utterback T."/>
            <person name="Town C.D."/>
        </authorList>
    </citation>
    <scope>NUCLEOTIDE SEQUENCE [LARGE SCALE MRNA] OF 130-281</scope>
    <source>
        <strain>cv. Columbia</strain>
    </source>
</reference>
<reference key="4">
    <citation type="journal article" date="2006" name="Proc. Natl. Acad. Sci. U.S.A.">
        <title>Cloning of DOG1, a quantitative trait locus controlling seed dormancy in Arabidopsis.</title>
        <authorList>
            <person name="Bentsink L."/>
            <person name="Jowett J."/>
            <person name="Hanhart C.J."/>
            <person name="Koornneef M."/>
        </authorList>
    </citation>
    <scope>GENE FAMILY</scope>
    <scope>NOMENCLATURE</scope>
    <scope>DISRUPTION PHENOTYPE</scope>
</reference>
<protein>
    <recommendedName>
        <fullName evidence="4">Protein DOG1-like 1</fullName>
    </recommendedName>
</protein>
<accession>Q9SN47</accession>
<accession>Q45GJ6</accession>
<evidence type="ECO:0000255" key="1">
    <source>
        <dbReference type="PROSITE-ProRule" id="PRU01147"/>
    </source>
</evidence>
<evidence type="ECO:0000256" key="2">
    <source>
        <dbReference type="SAM" id="MobiDB-lite"/>
    </source>
</evidence>
<evidence type="ECO:0000269" key="3">
    <source>
    </source>
</evidence>
<evidence type="ECO:0000303" key="4">
    <source>
    </source>
</evidence>
<evidence type="ECO:0000305" key="5"/>
<evidence type="ECO:0000312" key="6">
    <source>
        <dbReference type="Araport" id="AT4G18660"/>
    </source>
</evidence>
<evidence type="ECO:0000312" key="7">
    <source>
        <dbReference type="EMBL" id="CAB37451.1"/>
    </source>
</evidence>
<name>DOGL1_ARATH</name>
<feature type="chain" id="PRO_0000437686" description="Protein DOG1-like 1">
    <location>
        <begin position="1"/>
        <end position="281"/>
    </location>
</feature>
<feature type="domain" description="DOG1" evidence="1">
    <location>
        <begin position="9"/>
        <end position="265"/>
    </location>
</feature>
<feature type="region of interest" description="Disordered" evidence="2">
    <location>
        <begin position="262"/>
        <end position="281"/>
    </location>
</feature>
<keyword id="KW-1185">Reference proteome</keyword>
<gene>
    <name evidence="4" type="primary">DOGL1</name>
    <name evidence="6" type="ordered locus">At4g18660</name>
    <name evidence="7" type="ORF">F28A21.70</name>
</gene>
<dbReference type="EMBL" id="AL035526">
    <property type="protein sequence ID" value="CAB37451.1"/>
    <property type="molecule type" value="Genomic_DNA"/>
</dbReference>
<dbReference type="EMBL" id="AL161549">
    <property type="protein sequence ID" value="CAB78868.1"/>
    <property type="molecule type" value="Genomic_DNA"/>
</dbReference>
<dbReference type="EMBL" id="CP002687">
    <property type="protein sequence ID" value="AEE84073.1"/>
    <property type="status" value="ALT_SEQ"/>
    <property type="molecule type" value="Genomic_DNA"/>
</dbReference>
<dbReference type="EMBL" id="DQ132706">
    <property type="protein sequence ID" value="AAZ52736.1"/>
    <property type="molecule type" value="mRNA"/>
</dbReference>
<dbReference type="PIR" id="T04858">
    <property type="entry name" value="T04858"/>
</dbReference>
<dbReference type="RefSeq" id="NP_193601.5">
    <property type="nucleotide sequence ID" value="NM_117982.5"/>
</dbReference>
<dbReference type="SMR" id="Q9SN47"/>
<dbReference type="STRING" id="3702.Q9SN47"/>
<dbReference type="PaxDb" id="3702-AT4G18660.1"/>
<dbReference type="PeptideAtlas" id="Q9SN47"/>
<dbReference type="ProteomicsDB" id="222131"/>
<dbReference type="GeneID" id="827600"/>
<dbReference type="KEGG" id="ath:AT4G18660"/>
<dbReference type="Araport" id="AT4G18660"/>
<dbReference type="TAIR" id="AT4G18660"/>
<dbReference type="eggNOG" id="ENOG502QW7X">
    <property type="taxonomic scope" value="Eukaryota"/>
</dbReference>
<dbReference type="InParanoid" id="Q9SN47"/>
<dbReference type="OrthoDB" id="1897224at2759"/>
<dbReference type="PhylomeDB" id="Q9SN47"/>
<dbReference type="PRO" id="PR:Q9SN47"/>
<dbReference type="Proteomes" id="UP000006548">
    <property type="component" value="Chromosome 4"/>
</dbReference>
<dbReference type="ExpressionAtlas" id="Q9SN47">
    <property type="expression patterns" value="baseline and differential"/>
</dbReference>
<dbReference type="GO" id="GO:0043565">
    <property type="term" value="F:sequence-specific DNA binding"/>
    <property type="evidence" value="ECO:0007669"/>
    <property type="project" value="InterPro"/>
</dbReference>
<dbReference type="GO" id="GO:0006351">
    <property type="term" value="P:DNA-templated transcription"/>
    <property type="evidence" value="ECO:0007669"/>
    <property type="project" value="InterPro"/>
</dbReference>
<dbReference type="InterPro" id="IPR051886">
    <property type="entry name" value="Seed_Dev/Stress_Resp_Reg"/>
</dbReference>
<dbReference type="InterPro" id="IPR025422">
    <property type="entry name" value="TGA_domain"/>
</dbReference>
<dbReference type="PANTHER" id="PTHR46354">
    <property type="entry name" value="DOG1 DOMAIN-CONTAINING PROTEIN"/>
    <property type="match status" value="1"/>
</dbReference>
<dbReference type="PANTHER" id="PTHR46354:SF7">
    <property type="entry name" value="PROTEIN DOG1-LIKE 1"/>
    <property type="match status" value="1"/>
</dbReference>
<dbReference type="Pfam" id="PF14144">
    <property type="entry name" value="DOG1"/>
    <property type="match status" value="1"/>
</dbReference>
<dbReference type="PROSITE" id="PS51806">
    <property type="entry name" value="DOG1"/>
    <property type="match status" value="1"/>
</dbReference>
<organism>
    <name type="scientific">Arabidopsis thaliana</name>
    <name type="common">Mouse-ear cress</name>
    <dbReference type="NCBI Taxonomy" id="3702"/>
    <lineage>
        <taxon>Eukaryota</taxon>
        <taxon>Viridiplantae</taxon>
        <taxon>Streptophyta</taxon>
        <taxon>Embryophyta</taxon>
        <taxon>Tracheophyta</taxon>
        <taxon>Spermatophyta</taxon>
        <taxon>Magnoliopsida</taxon>
        <taxon>eudicotyledons</taxon>
        <taxon>Gunneridae</taxon>
        <taxon>Pentapetalae</taxon>
        <taxon>rosids</taxon>
        <taxon>malvids</taxon>
        <taxon>Brassicales</taxon>
        <taxon>Brassicaceae</taxon>
        <taxon>Camelineae</taxon>
        <taxon>Arabidopsis</taxon>
    </lineage>
</organism>
<sequence>MENPSSNLEKLQQDCYNEWMSLQAKRITELKEAISTGEKDDNKLLDLIRTAIRDFGDYARKRSEHSRRFSSNYFAPTWNTCLENALLWMGGCRPSSFIRLVYAMCGSQTEHRLTNFFNNTNHDIDSNLSMALGETRGGIGGGESMSDLTAEQLFKINELHLKTVEAENKLTKVSASLQEDTADTPIAVAAFYKEVIGQADVVVERALDKHEEDMGGLLVEADKLRMTTLTKIVDILTAVQAADFLLAGKKLHLAMHEWGKSREHRRLEASGGDSGGNVTRE</sequence>